<evidence type="ECO:0000255" key="1">
    <source>
        <dbReference type="HAMAP-Rule" id="MF_00040"/>
    </source>
</evidence>
<dbReference type="EMBL" id="AE005673">
    <property type="protein sequence ID" value="AAK23895.1"/>
    <property type="molecule type" value="Genomic_DNA"/>
</dbReference>
<dbReference type="PIR" id="C87487">
    <property type="entry name" value="C87487"/>
</dbReference>
<dbReference type="RefSeq" id="NP_420727.1">
    <property type="nucleotide sequence ID" value="NC_002696.2"/>
</dbReference>
<dbReference type="RefSeq" id="WP_010919786.1">
    <property type="nucleotide sequence ID" value="NC_002696.2"/>
</dbReference>
<dbReference type="SMR" id="Q9A706"/>
<dbReference type="STRING" id="190650.CC_1920"/>
<dbReference type="EnsemblBacteria" id="AAK23895">
    <property type="protein sequence ID" value="AAK23895"/>
    <property type="gene ID" value="CC_1920"/>
</dbReference>
<dbReference type="KEGG" id="ccr:CC_1920"/>
<dbReference type="PATRIC" id="fig|190650.5.peg.1937"/>
<dbReference type="eggNOG" id="COG0233">
    <property type="taxonomic scope" value="Bacteria"/>
</dbReference>
<dbReference type="HOGENOM" id="CLU_073981_2_0_5"/>
<dbReference type="BioCyc" id="CAULO:CC1920-MONOMER"/>
<dbReference type="Proteomes" id="UP000001816">
    <property type="component" value="Chromosome"/>
</dbReference>
<dbReference type="GO" id="GO:0005829">
    <property type="term" value="C:cytosol"/>
    <property type="evidence" value="ECO:0007669"/>
    <property type="project" value="GOC"/>
</dbReference>
<dbReference type="GO" id="GO:0043023">
    <property type="term" value="F:ribosomal large subunit binding"/>
    <property type="evidence" value="ECO:0007669"/>
    <property type="project" value="TreeGrafter"/>
</dbReference>
<dbReference type="GO" id="GO:0002184">
    <property type="term" value="P:cytoplasmic translational termination"/>
    <property type="evidence" value="ECO:0007669"/>
    <property type="project" value="TreeGrafter"/>
</dbReference>
<dbReference type="CDD" id="cd00520">
    <property type="entry name" value="RRF"/>
    <property type="match status" value="1"/>
</dbReference>
<dbReference type="FunFam" id="1.10.132.20:FF:000001">
    <property type="entry name" value="Ribosome-recycling factor"/>
    <property type="match status" value="1"/>
</dbReference>
<dbReference type="FunFam" id="3.30.1360.40:FF:000001">
    <property type="entry name" value="Ribosome-recycling factor"/>
    <property type="match status" value="1"/>
</dbReference>
<dbReference type="Gene3D" id="3.30.1360.40">
    <property type="match status" value="1"/>
</dbReference>
<dbReference type="Gene3D" id="1.10.132.20">
    <property type="entry name" value="Ribosome-recycling factor"/>
    <property type="match status" value="1"/>
</dbReference>
<dbReference type="HAMAP" id="MF_00040">
    <property type="entry name" value="RRF"/>
    <property type="match status" value="1"/>
</dbReference>
<dbReference type="InterPro" id="IPR002661">
    <property type="entry name" value="Ribosome_recyc_fac"/>
</dbReference>
<dbReference type="InterPro" id="IPR023584">
    <property type="entry name" value="Ribosome_recyc_fac_dom"/>
</dbReference>
<dbReference type="InterPro" id="IPR036191">
    <property type="entry name" value="RRF_sf"/>
</dbReference>
<dbReference type="NCBIfam" id="TIGR00496">
    <property type="entry name" value="frr"/>
    <property type="match status" value="1"/>
</dbReference>
<dbReference type="PANTHER" id="PTHR20982:SF3">
    <property type="entry name" value="MITOCHONDRIAL RIBOSOME RECYCLING FACTOR PSEUDO 1"/>
    <property type="match status" value="1"/>
</dbReference>
<dbReference type="PANTHER" id="PTHR20982">
    <property type="entry name" value="RIBOSOME RECYCLING FACTOR"/>
    <property type="match status" value="1"/>
</dbReference>
<dbReference type="Pfam" id="PF01765">
    <property type="entry name" value="RRF"/>
    <property type="match status" value="1"/>
</dbReference>
<dbReference type="SUPFAM" id="SSF55194">
    <property type="entry name" value="Ribosome recycling factor, RRF"/>
    <property type="match status" value="1"/>
</dbReference>
<feature type="chain" id="PRO_0000167436" description="Ribosome-recycling factor">
    <location>
        <begin position="1"/>
        <end position="188"/>
    </location>
</feature>
<comment type="function">
    <text evidence="1">Responsible for the release of ribosomes from messenger RNA at the termination of protein biosynthesis. May increase the efficiency of translation by recycling ribosomes from one round of translation to another.</text>
</comment>
<comment type="subcellular location">
    <subcellularLocation>
        <location evidence="1">Cytoplasm</location>
    </subcellularLocation>
</comment>
<comment type="similarity">
    <text evidence="1">Belongs to the RRF family.</text>
</comment>
<gene>
    <name evidence="1" type="primary">frr</name>
    <name type="ordered locus">CC_1920</name>
</gene>
<proteinExistence type="inferred from homology"/>
<reference key="1">
    <citation type="journal article" date="2001" name="Proc. Natl. Acad. Sci. U.S.A.">
        <title>Complete genome sequence of Caulobacter crescentus.</title>
        <authorList>
            <person name="Nierman W.C."/>
            <person name="Feldblyum T.V."/>
            <person name="Laub M.T."/>
            <person name="Paulsen I.T."/>
            <person name="Nelson K.E."/>
            <person name="Eisen J.A."/>
            <person name="Heidelberg J.F."/>
            <person name="Alley M.R.K."/>
            <person name="Ohta N."/>
            <person name="Maddock J.R."/>
            <person name="Potocka I."/>
            <person name="Nelson W.C."/>
            <person name="Newton A."/>
            <person name="Stephens C."/>
            <person name="Phadke N.D."/>
            <person name="Ely B."/>
            <person name="DeBoy R.T."/>
            <person name="Dodson R.J."/>
            <person name="Durkin A.S."/>
            <person name="Gwinn M.L."/>
            <person name="Haft D.H."/>
            <person name="Kolonay J.F."/>
            <person name="Smit J."/>
            <person name="Craven M.B."/>
            <person name="Khouri H.M."/>
            <person name="Shetty J."/>
            <person name="Berry K.J."/>
            <person name="Utterback T.R."/>
            <person name="Tran K."/>
            <person name="Wolf A.M."/>
            <person name="Vamathevan J.J."/>
            <person name="Ermolaeva M.D."/>
            <person name="White O."/>
            <person name="Salzberg S.L."/>
            <person name="Venter J.C."/>
            <person name="Shapiro L."/>
            <person name="Fraser C.M."/>
        </authorList>
    </citation>
    <scope>NUCLEOTIDE SEQUENCE [LARGE SCALE GENOMIC DNA]</scope>
    <source>
        <strain>ATCC 19089 / CIP 103742 / CB 15</strain>
    </source>
</reference>
<organism>
    <name type="scientific">Caulobacter vibrioides (strain ATCC 19089 / CIP 103742 / CB 15)</name>
    <name type="common">Caulobacter crescentus</name>
    <dbReference type="NCBI Taxonomy" id="190650"/>
    <lineage>
        <taxon>Bacteria</taxon>
        <taxon>Pseudomonadati</taxon>
        <taxon>Pseudomonadota</taxon>
        <taxon>Alphaproteobacteria</taxon>
        <taxon>Caulobacterales</taxon>
        <taxon>Caulobacteraceae</taxon>
        <taxon>Caulobacter</taxon>
    </lineage>
</organism>
<protein>
    <recommendedName>
        <fullName evidence="1">Ribosome-recycling factor</fullName>
        <shortName evidence="1">RRF</shortName>
    </recommendedName>
    <alternativeName>
        <fullName evidence="1">Ribosome-releasing factor</fullName>
    </alternativeName>
</protein>
<keyword id="KW-0963">Cytoplasm</keyword>
<keyword id="KW-0648">Protein biosynthesis</keyword>
<keyword id="KW-1185">Reference proteome</keyword>
<accession>Q9A706</accession>
<name>RRF_CAUVC</name>
<sequence>MAAAEKPVLSRYRDRMDKAVSALKEEFGSLRTGRASASLLDQVMVEAYGSTTPLNAVASVSVPEPRQINVSVWDRGVVVSVEKAIRASGLGLNPVVEGQNLRIPIPPLTEERRRDLQKIAGKYAEQQKIAVRNVRRDANDDLKKAEKDGAIAEDERKKMETEVQKMTDDAIKRIDEALKTKEHEIMQV</sequence>